<comment type="function">
    <text evidence="5">Enhances DNA synthesis and may play a role in cell proliferation.</text>
</comment>
<comment type="subcellular location">
    <subcellularLocation>
        <location evidence="5">Nucleus</location>
    </subcellularLocation>
</comment>
<comment type="tissue specificity">
    <text evidence="5">Detected in testis, heart, spinal cord and brain.</text>
</comment>
<comment type="similarity">
    <text evidence="6">Belongs to the HDGF family.</text>
</comment>
<protein>
    <recommendedName>
        <fullName>Hepatoma-derived growth factor-related protein 3</fullName>
        <shortName>HRP-3</shortName>
    </recommendedName>
    <alternativeName>
        <fullName>Hepatoma-derived growth factor 2</fullName>
        <shortName>HDGF-2</shortName>
    </alternativeName>
</protein>
<feature type="chain" id="PRO_0000191703" description="Hepatoma-derived growth factor-related protein 3">
    <location>
        <begin position="1"/>
        <end position="203"/>
    </location>
</feature>
<feature type="domain" description="PWWP" evidence="3">
    <location>
        <begin position="11"/>
        <end position="68"/>
    </location>
</feature>
<feature type="region of interest" description="Disordered" evidence="4">
    <location>
        <begin position="97"/>
        <end position="203"/>
    </location>
</feature>
<feature type="short sequence motif" description="Nuclear localization signal" evidence="2">
    <location>
        <begin position="136"/>
        <end position="148"/>
    </location>
</feature>
<feature type="compositionally biased region" description="Polar residues" evidence="4">
    <location>
        <begin position="100"/>
        <end position="109"/>
    </location>
</feature>
<feature type="compositionally biased region" description="Acidic residues" evidence="4">
    <location>
        <begin position="121"/>
        <end position="130"/>
    </location>
</feature>
<feature type="compositionally biased region" description="Basic residues" evidence="4">
    <location>
        <begin position="135"/>
        <end position="160"/>
    </location>
</feature>
<feature type="compositionally biased region" description="Basic and acidic residues" evidence="4">
    <location>
        <begin position="169"/>
        <end position="178"/>
    </location>
</feature>
<feature type="compositionally biased region" description="Polar residues" evidence="4">
    <location>
        <begin position="188"/>
        <end position="203"/>
    </location>
</feature>
<feature type="modified residue" description="Phosphothreonine" evidence="1">
    <location>
        <position position="110"/>
    </location>
</feature>
<feature type="modified residue" description="Phosphoserine" evidence="1">
    <location>
        <position position="121"/>
    </location>
</feature>
<feature type="modified residue" description="Phosphoserine" evidence="1">
    <location>
        <position position="122"/>
    </location>
</feature>
<feature type="modified residue" description="Phosphoserine" evidence="9">
    <location>
        <position position="162"/>
    </location>
</feature>
<feature type="strand" evidence="10">
    <location>
        <begin position="14"/>
        <end position="17"/>
    </location>
</feature>
<feature type="strand" evidence="10">
    <location>
        <begin position="25"/>
        <end position="29"/>
    </location>
</feature>
<feature type="strand" evidence="12">
    <location>
        <begin position="34"/>
        <end position="36"/>
    </location>
</feature>
<feature type="strand" evidence="10">
    <location>
        <begin position="44"/>
        <end position="48"/>
    </location>
</feature>
<feature type="turn" evidence="10">
    <location>
        <begin position="49"/>
        <end position="51"/>
    </location>
</feature>
<feature type="strand" evidence="10">
    <location>
        <begin position="54"/>
        <end position="57"/>
    </location>
</feature>
<feature type="helix" evidence="10">
    <location>
        <begin position="59"/>
        <end position="61"/>
    </location>
</feature>
<feature type="strand" evidence="10">
    <location>
        <begin position="62"/>
        <end position="64"/>
    </location>
</feature>
<feature type="helix" evidence="10">
    <location>
        <begin position="65"/>
        <end position="72"/>
    </location>
</feature>
<feature type="helix" evidence="10">
    <location>
        <begin position="79"/>
        <end position="90"/>
    </location>
</feature>
<feature type="turn" evidence="11">
    <location>
        <begin position="92"/>
        <end position="95"/>
    </location>
</feature>
<organism>
    <name type="scientific">Homo sapiens</name>
    <name type="common">Human</name>
    <dbReference type="NCBI Taxonomy" id="9606"/>
    <lineage>
        <taxon>Eukaryota</taxon>
        <taxon>Metazoa</taxon>
        <taxon>Chordata</taxon>
        <taxon>Craniata</taxon>
        <taxon>Vertebrata</taxon>
        <taxon>Euteleostomi</taxon>
        <taxon>Mammalia</taxon>
        <taxon>Eutheria</taxon>
        <taxon>Euarchontoglires</taxon>
        <taxon>Primates</taxon>
        <taxon>Haplorrhini</taxon>
        <taxon>Catarrhini</taxon>
        <taxon>Hominidae</taxon>
        <taxon>Homo</taxon>
    </lineage>
</organism>
<keyword id="KW-0002">3D-structure</keyword>
<keyword id="KW-0339">Growth factor</keyword>
<keyword id="KW-0539">Nucleus</keyword>
<keyword id="KW-0597">Phosphoprotein</keyword>
<keyword id="KW-1267">Proteomics identification</keyword>
<keyword id="KW-1185">Reference proteome</keyword>
<gene>
    <name evidence="8" type="primary">HDGFL3</name>
    <name evidence="7" type="synonym">HDGF2</name>
    <name type="synonym">HDGFRP3</name>
    <name type="ORF">CGI-142</name>
</gene>
<accession>Q9Y3E1</accession>
<proteinExistence type="evidence at protein level"/>
<evidence type="ECO:0000250" key="1">
    <source>
        <dbReference type="UniProtKB" id="Q9JMG7"/>
    </source>
</evidence>
<evidence type="ECO:0000255" key="2"/>
<evidence type="ECO:0000255" key="3">
    <source>
        <dbReference type="PROSITE-ProRule" id="PRU00162"/>
    </source>
</evidence>
<evidence type="ECO:0000256" key="4">
    <source>
        <dbReference type="SAM" id="MobiDB-lite"/>
    </source>
</evidence>
<evidence type="ECO:0000269" key="5">
    <source>
    </source>
</evidence>
<evidence type="ECO:0000305" key="6"/>
<evidence type="ECO:0000312" key="7">
    <source>
        <dbReference type="EMBL" id="AAM27001.1"/>
    </source>
</evidence>
<evidence type="ECO:0000312" key="8">
    <source>
        <dbReference type="HGNC" id="HGNC:24937"/>
    </source>
</evidence>
<evidence type="ECO:0007744" key="9">
    <source>
    </source>
</evidence>
<evidence type="ECO:0007829" key="10">
    <source>
        <dbReference type="PDB" id="6IIP"/>
    </source>
</evidence>
<evidence type="ECO:0007829" key="11">
    <source>
        <dbReference type="PDB" id="6IIQ"/>
    </source>
</evidence>
<evidence type="ECO:0007829" key="12">
    <source>
        <dbReference type="PDB" id="6IIT"/>
    </source>
</evidence>
<sequence>MARPRPREYKAGDLVFAKMKGYPHWPARIDELPEGAVKPPANKYPIFFFGTHETAFLGPKDLFPYKEYKDKFGKSNKRKGFNEGLWEIENNPGVKFTGYQAIQQQSSSETEGEGGNTADASSEEEGDRVEEDGKGKRKNEKAGSKRKKSYTSKKSSKQSRKSPGDEDDKDCKEEENKSSSEGGDAGNDTRNTTSDLQKTSEGT</sequence>
<reference key="1">
    <citation type="journal article" date="1999" name="Biochem. Biophys. Res. Commun.">
        <title>A new member of a hepatoma-derived growth factor gene family can translocate to the nucleus.</title>
        <authorList>
            <person name="Ikegame K."/>
            <person name="Yamamoto M."/>
            <person name="Kishima Y."/>
            <person name="Enomoto H."/>
            <person name="Yoshida K."/>
            <person name="Suemura M."/>
            <person name="Kishimoto T."/>
            <person name="Nakamura H."/>
        </authorList>
    </citation>
    <scope>NUCLEOTIDE SEQUENCE [MRNA]</scope>
    <scope>FUNCTION</scope>
    <scope>SUBCELLULAR LOCATION</scope>
    <scope>TISSUE SPECIFICITY</scope>
    <source>
        <tissue>Lymphocyte</tissue>
    </source>
</reference>
<reference key="2">
    <citation type="submission" date="1998-12" db="EMBL/GenBank/DDBJ databases">
        <title>Cloning of a novel human cDNA which is a homolog to mouse hepatoma-derived growth factor (mHDGF) and termed hHDGF2.</title>
        <authorList>
            <person name="Yu L."/>
            <person name="Fu Q."/>
            <person name="Tu Q."/>
        </authorList>
    </citation>
    <scope>NUCLEOTIDE SEQUENCE [MRNA]</scope>
</reference>
<reference key="3">
    <citation type="journal article" date="2000" name="Genome Res.">
        <title>Identification of novel human genes evolutionarily conserved in Caenorhabditis elegans by comparative proteomics.</title>
        <authorList>
            <person name="Lai C.-H."/>
            <person name="Chou C.-Y."/>
            <person name="Ch'ang L.-Y."/>
            <person name="Liu C.-S."/>
            <person name="Lin W.-C."/>
        </authorList>
    </citation>
    <scope>NUCLEOTIDE SEQUENCE [LARGE SCALE MRNA]</scope>
</reference>
<reference key="4">
    <citation type="journal article" date="2004" name="Nat. Genet.">
        <title>Complete sequencing and characterization of 21,243 full-length human cDNAs.</title>
        <authorList>
            <person name="Ota T."/>
            <person name="Suzuki Y."/>
            <person name="Nishikawa T."/>
            <person name="Otsuki T."/>
            <person name="Sugiyama T."/>
            <person name="Irie R."/>
            <person name="Wakamatsu A."/>
            <person name="Hayashi K."/>
            <person name="Sato H."/>
            <person name="Nagai K."/>
            <person name="Kimura K."/>
            <person name="Makita H."/>
            <person name="Sekine M."/>
            <person name="Obayashi M."/>
            <person name="Nishi T."/>
            <person name="Shibahara T."/>
            <person name="Tanaka T."/>
            <person name="Ishii S."/>
            <person name="Yamamoto J."/>
            <person name="Saito K."/>
            <person name="Kawai Y."/>
            <person name="Isono Y."/>
            <person name="Nakamura Y."/>
            <person name="Nagahari K."/>
            <person name="Murakami K."/>
            <person name="Yasuda T."/>
            <person name="Iwayanagi T."/>
            <person name="Wagatsuma M."/>
            <person name="Shiratori A."/>
            <person name="Sudo H."/>
            <person name="Hosoiri T."/>
            <person name="Kaku Y."/>
            <person name="Kodaira H."/>
            <person name="Kondo H."/>
            <person name="Sugawara M."/>
            <person name="Takahashi M."/>
            <person name="Kanda K."/>
            <person name="Yokoi T."/>
            <person name="Furuya T."/>
            <person name="Kikkawa E."/>
            <person name="Omura Y."/>
            <person name="Abe K."/>
            <person name="Kamihara K."/>
            <person name="Katsuta N."/>
            <person name="Sato K."/>
            <person name="Tanikawa M."/>
            <person name="Yamazaki M."/>
            <person name="Ninomiya K."/>
            <person name="Ishibashi T."/>
            <person name="Yamashita H."/>
            <person name="Murakawa K."/>
            <person name="Fujimori K."/>
            <person name="Tanai H."/>
            <person name="Kimata M."/>
            <person name="Watanabe M."/>
            <person name="Hiraoka S."/>
            <person name="Chiba Y."/>
            <person name="Ishida S."/>
            <person name="Ono Y."/>
            <person name="Takiguchi S."/>
            <person name="Watanabe S."/>
            <person name="Yosida M."/>
            <person name="Hotuta T."/>
            <person name="Kusano J."/>
            <person name="Kanehori K."/>
            <person name="Takahashi-Fujii A."/>
            <person name="Hara H."/>
            <person name="Tanase T.-O."/>
            <person name="Nomura Y."/>
            <person name="Togiya S."/>
            <person name="Komai F."/>
            <person name="Hara R."/>
            <person name="Takeuchi K."/>
            <person name="Arita M."/>
            <person name="Imose N."/>
            <person name="Musashino K."/>
            <person name="Yuuki H."/>
            <person name="Oshima A."/>
            <person name="Sasaki N."/>
            <person name="Aotsuka S."/>
            <person name="Yoshikawa Y."/>
            <person name="Matsunawa H."/>
            <person name="Ichihara T."/>
            <person name="Shiohata N."/>
            <person name="Sano S."/>
            <person name="Moriya S."/>
            <person name="Momiyama H."/>
            <person name="Satoh N."/>
            <person name="Takami S."/>
            <person name="Terashima Y."/>
            <person name="Suzuki O."/>
            <person name="Nakagawa S."/>
            <person name="Senoh A."/>
            <person name="Mizoguchi H."/>
            <person name="Goto Y."/>
            <person name="Shimizu F."/>
            <person name="Wakebe H."/>
            <person name="Hishigaki H."/>
            <person name="Watanabe T."/>
            <person name="Sugiyama A."/>
            <person name="Takemoto M."/>
            <person name="Kawakami B."/>
            <person name="Yamazaki M."/>
            <person name="Watanabe K."/>
            <person name="Kumagai A."/>
            <person name="Itakura S."/>
            <person name="Fukuzumi Y."/>
            <person name="Fujimori Y."/>
            <person name="Komiyama M."/>
            <person name="Tashiro H."/>
            <person name="Tanigami A."/>
            <person name="Fujiwara T."/>
            <person name="Ono T."/>
            <person name="Yamada K."/>
            <person name="Fujii Y."/>
            <person name="Ozaki K."/>
            <person name="Hirao M."/>
            <person name="Ohmori Y."/>
            <person name="Kawabata A."/>
            <person name="Hikiji T."/>
            <person name="Kobatake N."/>
            <person name="Inagaki H."/>
            <person name="Ikema Y."/>
            <person name="Okamoto S."/>
            <person name="Okitani R."/>
            <person name="Kawakami T."/>
            <person name="Noguchi S."/>
            <person name="Itoh T."/>
            <person name="Shigeta K."/>
            <person name="Senba T."/>
            <person name="Matsumura K."/>
            <person name="Nakajima Y."/>
            <person name="Mizuno T."/>
            <person name="Morinaga M."/>
            <person name="Sasaki M."/>
            <person name="Togashi T."/>
            <person name="Oyama M."/>
            <person name="Hata H."/>
            <person name="Watanabe M."/>
            <person name="Komatsu T."/>
            <person name="Mizushima-Sugano J."/>
            <person name="Satoh T."/>
            <person name="Shirai Y."/>
            <person name="Takahashi Y."/>
            <person name="Nakagawa K."/>
            <person name="Okumura K."/>
            <person name="Nagase T."/>
            <person name="Nomura N."/>
            <person name="Kikuchi H."/>
            <person name="Masuho Y."/>
            <person name="Yamashita R."/>
            <person name="Nakai K."/>
            <person name="Yada T."/>
            <person name="Nakamura Y."/>
            <person name="Ohara O."/>
            <person name="Isogai T."/>
            <person name="Sugano S."/>
        </authorList>
    </citation>
    <scope>NUCLEOTIDE SEQUENCE [LARGE SCALE MRNA]</scope>
    <source>
        <tissue>Teratocarcinoma</tissue>
    </source>
</reference>
<reference key="5">
    <citation type="journal article" date="2004" name="Genome Res.">
        <title>The status, quality, and expansion of the NIH full-length cDNA project: the Mammalian Gene Collection (MGC).</title>
        <authorList>
            <consortium name="The MGC Project Team"/>
        </authorList>
    </citation>
    <scope>NUCLEOTIDE SEQUENCE [LARGE SCALE MRNA]</scope>
    <source>
        <tissue>Uterus</tissue>
    </source>
</reference>
<reference key="6">
    <citation type="journal article" date="2011" name="Sci. Signal.">
        <title>System-wide temporal characterization of the proteome and phosphoproteome of human embryonic stem cell differentiation.</title>
        <authorList>
            <person name="Rigbolt K.T."/>
            <person name="Prokhorova T.A."/>
            <person name="Akimov V."/>
            <person name="Henningsen J."/>
            <person name="Johansen P.T."/>
            <person name="Kratchmarova I."/>
            <person name="Kassem M."/>
            <person name="Mann M."/>
            <person name="Olsen J.V."/>
            <person name="Blagoev B."/>
        </authorList>
    </citation>
    <scope>PHOSPHORYLATION [LARGE SCALE ANALYSIS] AT SER-162</scope>
    <scope>IDENTIFICATION BY MASS SPECTROMETRY [LARGE SCALE ANALYSIS]</scope>
</reference>
<dbReference type="EMBL" id="AB029156">
    <property type="protein sequence ID" value="BAA90477.1"/>
    <property type="molecule type" value="mRNA"/>
</dbReference>
<dbReference type="EMBL" id="AF110642">
    <property type="protein sequence ID" value="AAM27001.1"/>
    <property type="molecule type" value="mRNA"/>
</dbReference>
<dbReference type="EMBL" id="AF151900">
    <property type="protein sequence ID" value="AAD34137.1"/>
    <property type="molecule type" value="mRNA"/>
</dbReference>
<dbReference type="EMBL" id="AK001280">
    <property type="protein sequence ID" value="BAA91597.1"/>
    <property type="molecule type" value="mRNA"/>
</dbReference>
<dbReference type="EMBL" id="BC015483">
    <property type="protein sequence ID" value="AAH15483.1"/>
    <property type="molecule type" value="mRNA"/>
</dbReference>
<dbReference type="CCDS" id="CCDS32314.1"/>
<dbReference type="PIR" id="JC7163">
    <property type="entry name" value="JC7163"/>
</dbReference>
<dbReference type="RefSeq" id="NP_057157.1">
    <property type="nucleotide sequence ID" value="NM_016073.4"/>
</dbReference>
<dbReference type="PDB" id="6IIP">
    <property type="method" value="X-ray"/>
    <property type="resolution" value="0.95 A"/>
    <property type="chains" value="A/B=8-94"/>
</dbReference>
<dbReference type="PDB" id="6IIQ">
    <property type="method" value="X-ray"/>
    <property type="resolution" value="1.85 A"/>
    <property type="chains" value="A/B/C=1-99"/>
</dbReference>
<dbReference type="PDB" id="6IIR">
    <property type="method" value="X-ray"/>
    <property type="resolution" value="2.20 A"/>
    <property type="chains" value="A/B=1-99"/>
</dbReference>
<dbReference type="PDB" id="6IIS">
    <property type="method" value="X-ray"/>
    <property type="resolution" value="2.36 A"/>
    <property type="chains" value="A/B=1-99"/>
</dbReference>
<dbReference type="PDB" id="6IIT">
    <property type="method" value="X-ray"/>
    <property type="resolution" value="2.10 A"/>
    <property type="chains" value="A/B=1-99"/>
</dbReference>
<dbReference type="PDBsum" id="6IIP"/>
<dbReference type="PDBsum" id="6IIQ"/>
<dbReference type="PDBsum" id="6IIR"/>
<dbReference type="PDBsum" id="6IIS"/>
<dbReference type="PDBsum" id="6IIT"/>
<dbReference type="BMRB" id="Q9Y3E1"/>
<dbReference type="SMR" id="Q9Y3E1"/>
<dbReference type="BioGRID" id="119129">
    <property type="interactions" value="43"/>
</dbReference>
<dbReference type="FunCoup" id="Q9Y3E1">
    <property type="interactions" value="1949"/>
</dbReference>
<dbReference type="IntAct" id="Q9Y3E1">
    <property type="interactions" value="27"/>
</dbReference>
<dbReference type="STRING" id="9606.ENSP00000299633"/>
<dbReference type="GlyGen" id="Q9Y3E1">
    <property type="glycosylation" value="1 site, 1 O-linked glycan (1 site)"/>
</dbReference>
<dbReference type="iPTMnet" id="Q9Y3E1"/>
<dbReference type="PhosphoSitePlus" id="Q9Y3E1"/>
<dbReference type="SwissPalm" id="Q9Y3E1"/>
<dbReference type="BioMuta" id="HDGFL3"/>
<dbReference type="DMDM" id="68052386"/>
<dbReference type="jPOST" id="Q9Y3E1"/>
<dbReference type="MassIVE" id="Q9Y3E1"/>
<dbReference type="PaxDb" id="9606-ENSP00000299633"/>
<dbReference type="PeptideAtlas" id="Q9Y3E1"/>
<dbReference type="ProteomicsDB" id="86028"/>
<dbReference type="Pumba" id="Q9Y3E1"/>
<dbReference type="TopDownProteomics" id="Q9Y3E1"/>
<dbReference type="Antibodypedia" id="28189">
    <property type="antibodies" value="196 antibodies from 29 providers"/>
</dbReference>
<dbReference type="DNASU" id="50810"/>
<dbReference type="Ensembl" id="ENST00000299633.7">
    <property type="protein sequence ID" value="ENSP00000299633.4"/>
    <property type="gene ID" value="ENSG00000166503.10"/>
</dbReference>
<dbReference type="Ensembl" id="ENST00000715404.1">
    <property type="protein sequence ID" value="ENSP00000520451.1"/>
    <property type="gene ID" value="ENSG00000166503.10"/>
</dbReference>
<dbReference type="GeneID" id="50810"/>
<dbReference type="KEGG" id="hsa:50810"/>
<dbReference type="MANE-Select" id="ENST00000299633.7">
    <property type="protein sequence ID" value="ENSP00000299633.4"/>
    <property type="RefSeq nucleotide sequence ID" value="NM_016073.4"/>
    <property type="RefSeq protein sequence ID" value="NP_057157.1"/>
</dbReference>
<dbReference type="UCSC" id="uc002bjs.3">
    <property type="organism name" value="human"/>
</dbReference>
<dbReference type="AGR" id="HGNC:24937"/>
<dbReference type="CTD" id="50810"/>
<dbReference type="DisGeNET" id="50810"/>
<dbReference type="GeneCards" id="HDGFL3"/>
<dbReference type="HGNC" id="HGNC:24937">
    <property type="gene designation" value="HDGFL3"/>
</dbReference>
<dbReference type="HPA" id="ENSG00000166503">
    <property type="expression patterns" value="Low tissue specificity"/>
</dbReference>
<dbReference type="neXtProt" id="NX_Q9Y3E1"/>
<dbReference type="OpenTargets" id="ENSG00000166503"/>
<dbReference type="VEuPathDB" id="HostDB:ENSG00000166503"/>
<dbReference type="eggNOG" id="KOG1904">
    <property type="taxonomic scope" value="Eukaryota"/>
</dbReference>
<dbReference type="GeneTree" id="ENSGT00940000153942"/>
<dbReference type="HOGENOM" id="CLU_090867_1_0_1"/>
<dbReference type="InParanoid" id="Q9Y3E1"/>
<dbReference type="OMA" id="THETXAI"/>
<dbReference type="OrthoDB" id="62853at2759"/>
<dbReference type="PAN-GO" id="Q9Y3E1">
    <property type="GO annotations" value="4 GO annotations based on evolutionary models"/>
</dbReference>
<dbReference type="PhylomeDB" id="Q9Y3E1"/>
<dbReference type="PathwayCommons" id="Q9Y3E1"/>
<dbReference type="SignaLink" id="Q9Y3E1"/>
<dbReference type="BioGRID-ORCS" id="50810">
    <property type="hits" value="11 hits in 1116 CRISPR screens"/>
</dbReference>
<dbReference type="ChiTaRS" id="HDGFL3">
    <property type="organism name" value="human"/>
</dbReference>
<dbReference type="GeneWiki" id="HDGFRP3"/>
<dbReference type="GenomeRNAi" id="50810"/>
<dbReference type="Pharos" id="Q9Y3E1">
    <property type="development level" value="Tbio"/>
</dbReference>
<dbReference type="PRO" id="PR:Q9Y3E1"/>
<dbReference type="Proteomes" id="UP000005640">
    <property type="component" value="Chromosome 15"/>
</dbReference>
<dbReference type="RNAct" id="Q9Y3E1">
    <property type="molecule type" value="protein"/>
</dbReference>
<dbReference type="Bgee" id="ENSG00000166503">
    <property type="expression patterns" value="Expressed in cortical plate and 211 other cell types or tissues"/>
</dbReference>
<dbReference type="ExpressionAtlas" id="Q9Y3E1">
    <property type="expression patterns" value="baseline and differential"/>
</dbReference>
<dbReference type="GO" id="GO:0005829">
    <property type="term" value="C:cytosol"/>
    <property type="evidence" value="ECO:0000250"/>
    <property type="project" value="UniProtKB"/>
</dbReference>
<dbReference type="GO" id="GO:0005576">
    <property type="term" value="C:extracellular region"/>
    <property type="evidence" value="ECO:0007005"/>
    <property type="project" value="BHF-UCL"/>
</dbReference>
<dbReference type="GO" id="GO:0005654">
    <property type="term" value="C:nucleoplasm"/>
    <property type="evidence" value="ECO:0000314"/>
    <property type="project" value="HPA"/>
</dbReference>
<dbReference type="GO" id="GO:0005634">
    <property type="term" value="C:nucleus"/>
    <property type="evidence" value="ECO:0000314"/>
    <property type="project" value="UniProtKB"/>
</dbReference>
<dbReference type="GO" id="GO:0008083">
    <property type="term" value="F:growth factor activity"/>
    <property type="evidence" value="ECO:0007669"/>
    <property type="project" value="UniProtKB-KW"/>
</dbReference>
<dbReference type="GO" id="GO:0008017">
    <property type="term" value="F:microtubule binding"/>
    <property type="evidence" value="ECO:0000250"/>
    <property type="project" value="UniProtKB"/>
</dbReference>
<dbReference type="GO" id="GO:0015631">
    <property type="term" value="F:tubulin binding"/>
    <property type="evidence" value="ECO:0000250"/>
    <property type="project" value="UniProtKB"/>
</dbReference>
<dbReference type="GO" id="GO:0046785">
    <property type="term" value="P:microtubule polymerization"/>
    <property type="evidence" value="ECO:0000250"/>
    <property type="project" value="UniProtKB"/>
</dbReference>
<dbReference type="GO" id="GO:0007026">
    <property type="term" value="P:negative regulation of microtubule depolymerization"/>
    <property type="evidence" value="ECO:0000250"/>
    <property type="project" value="UniProtKB"/>
</dbReference>
<dbReference type="GO" id="GO:0031175">
    <property type="term" value="P:neuron projection development"/>
    <property type="evidence" value="ECO:0000250"/>
    <property type="project" value="UniProtKB"/>
</dbReference>
<dbReference type="CDD" id="cd20150">
    <property type="entry name" value="PWWP_HDGFL3"/>
    <property type="match status" value="1"/>
</dbReference>
<dbReference type="FunFam" id="2.30.30.140:FF:000017">
    <property type="entry name" value="hepatoma-derived growth factor isoform X1"/>
    <property type="match status" value="1"/>
</dbReference>
<dbReference type="Gene3D" id="2.30.30.140">
    <property type="match status" value="1"/>
</dbReference>
<dbReference type="InterPro" id="IPR000313">
    <property type="entry name" value="PWWP_dom"/>
</dbReference>
<dbReference type="PANTHER" id="PTHR12550:SF82">
    <property type="entry name" value="HDGF LIKE 3"/>
    <property type="match status" value="1"/>
</dbReference>
<dbReference type="PANTHER" id="PTHR12550">
    <property type="entry name" value="HEPATOMA-DERIVED GROWTH FACTOR-RELATED"/>
    <property type="match status" value="1"/>
</dbReference>
<dbReference type="Pfam" id="PF00855">
    <property type="entry name" value="PWWP"/>
    <property type="match status" value="1"/>
</dbReference>
<dbReference type="SMART" id="SM00293">
    <property type="entry name" value="PWWP"/>
    <property type="match status" value="1"/>
</dbReference>
<dbReference type="SUPFAM" id="SSF63748">
    <property type="entry name" value="Tudor/PWWP/MBT"/>
    <property type="match status" value="1"/>
</dbReference>
<dbReference type="PROSITE" id="PS50812">
    <property type="entry name" value="PWWP"/>
    <property type="match status" value="1"/>
</dbReference>
<name>HDGR3_HUMAN</name>